<proteinExistence type="inferred from homology"/>
<reference key="1">
    <citation type="submission" date="2006-05" db="EMBL/GenBank/DDBJ databases">
        <authorList>
            <consortium name="Genoscope"/>
        </authorList>
    </citation>
    <scope>NUCLEOTIDE SEQUENCE [LARGE SCALE GENOMIC DNA]</scope>
    <source>
        <strain>RCC307</strain>
    </source>
</reference>
<organism>
    <name type="scientific">Synechococcus sp. (strain RCC307)</name>
    <dbReference type="NCBI Taxonomy" id="316278"/>
    <lineage>
        <taxon>Bacteria</taxon>
        <taxon>Bacillati</taxon>
        <taxon>Cyanobacteriota</taxon>
        <taxon>Cyanophyceae</taxon>
        <taxon>Synechococcales</taxon>
        <taxon>Synechococcaceae</taxon>
        <taxon>Synechococcus</taxon>
    </lineage>
</organism>
<keyword id="KW-1185">Reference proteome</keyword>
<keyword id="KW-0687">Ribonucleoprotein</keyword>
<keyword id="KW-0689">Ribosomal protein</keyword>
<gene>
    <name evidence="1" type="primary">rpmJ</name>
    <name type="ordered locus">SynRCC307_2136</name>
</gene>
<feature type="chain" id="PRO_1000003421" description="Large ribosomal subunit protein bL36">
    <location>
        <begin position="1"/>
        <end position="37"/>
    </location>
</feature>
<evidence type="ECO:0000255" key="1">
    <source>
        <dbReference type="HAMAP-Rule" id="MF_00251"/>
    </source>
</evidence>
<evidence type="ECO:0000305" key="2"/>
<sequence length="37" mass="4377">MKVRASVKRMCDKCRVIRRHGRVMVICANPKHKQRQG</sequence>
<comment type="similarity">
    <text evidence="1">Belongs to the bacterial ribosomal protein bL36 family.</text>
</comment>
<dbReference type="EMBL" id="CT978603">
    <property type="protein sequence ID" value="CAK29039.1"/>
    <property type="molecule type" value="Genomic_DNA"/>
</dbReference>
<dbReference type="SMR" id="A5GVY0"/>
<dbReference type="STRING" id="316278.SynRCC307_2136"/>
<dbReference type="KEGG" id="syr:SynRCC307_2136"/>
<dbReference type="eggNOG" id="COG0257">
    <property type="taxonomic scope" value="Bacteria"/>
</dbReference>
<dbReference type="HOGENOM" id="CLU_135723_6_2_3"/>
<dbReference type="OrthoDB" id="9802520at2"/>
<dbReference type="Proteomes" id="UP000001115">
    <property type="component" value="Chromosome"/>
</dbReference>
<dbReference type="GO" id="GO:0005737">
    <property type="term" value="C:cytoplasm"/>
    <property type="evidence" value="ECO:0007669"/>
    <property type="project" value="UniProtKB-ARBA"/>
</dbReference>
<dbReference type="GO" id="GO:1990904">
    <property type="term" value="C:ribonucleoprotein complex"/>
    <property type="evidence" value="ECO:0007669"/>
    <property type="project" value="UniProtKB-KW"/>
</dbReference>
<dbReference type="GO" id="GO:0005840">
    <property type="term" value="C:ribosome"/>
    <property type="evidence" value="ECO:0007669"/>
    <property type="project" value="UniProtKB-KW"/>
</dbReference>
<dbReference type="GO" id="GO:0003735">
    <property type="term" value="F:structural constituent of ribosome"/>
    <property type="evidence" value="ECO:0007669"/>
    <property type="project" value="InterPro"/>
</dbReference>
<dbReference type="GO" id="GO:0006412">
    <property type="term" value="P:translation"/>
    <property type="evidence" value="ECO:0007669"/>
    <property type="project" value="UniProtKB-UniRule"/>
</dbReference>
<dbReference type="HAMAP" id="MF_00251">
    <property type="entry name" value="Ribosomal_bL36"/>
    <property type="match status" value="1"/>
</dbReference>
<dbReference type="InterPro" id="IPR000473">
    <property type="entry name" value="Ribosomal_bL36"/>
</dbReference>
<dbReference type="InterPro" id="IPR035977">
    <property type="entry name" value="Ribosomal_bL36_sp"/>
</dbReference>
<dbReference type="NCBIfam" id="TIGR01022">
    <property type="entry name" value="rpmJ_bact"/>
    <property type="match status" value="1"/>
</dbReference>
<dbReference type="PANTHER" id="PTHR42888">
    <property type="entry name" value="50S RIBOSOMAL PROTEIN L36, CHLOROPLASTIC"/>
    <property type="match status" value="1"/>
</dbReference>
<dbReference type="PANTHER" id="PTHR42888:SF1">
    <property type="entry name" value="LARGE RIBOSOMAL SUBUNIT PROTEIN BL36C"/>
    <property type="match status" value="1"/>
</dbReference>
<dbReference type="Pfam" id="PF00444">
    <property type="entry name" value="Ribosomal_L36"/>
    <property type="match status" value="1"/>
</dbReference>
<dbReference type="SUPFAM" id="SSF57840">
    <property type="entry name" value="Ribosomal protein L36"/>
    <property type="match status" value="1"/>
</dbReference>
<dbReference type="PROSITE" id="PS00828">
    <property type="entry name" value="RIBOSOMAL_L36"/>
    <property type="match status" value="1"/>
</dbReference>
<protein>
    <recommendedName>
        <fullName evidence="1">Large ribosomal subunit protein bL36</fullName>
    </recommendedName>
    <alternativeName>
        <fullName evidence="2">50S ribosomal protein L36</fullName>
    </alternativeName>
</protein>
<name>RL36_SYNR3</name>
<accession>A5GVY0</accession>